<proteinExistence type="evidence at protein level"/>
<organism>
    <name type="scientific">Saccharomyces cerevisiae (strain ATCC 204508 / S288c)</name>
    <name type="common">Baker's yeast</name>
    <dbReference type="NCBI Taxonomy" id="559292"/>
    <lineage>
        <taxon>Eukaryota</taxon>
        <taxon>Fungi</taxon>
        <taxon>Dikarya</taxon>
        <taxon>Ascomycota</taxon>
        <taxon>Saccharomycotina</taxon>
        <taxon>Saccharomycetes</taxon>
        <taxon>Saccharomycetales</taxon>
        <taxon>Saccharomycetaceae</taxon>
        <taxon>Saccharomyces</taxon>
    </lineage>
</organism>
<comment type="function">
    <text evidence="3 4 5">Component of the SEA complex which coats the vacuolar membrane and is involved in intracellular trafficking, autophagy, response to nitrogen starvation, and amino acid biogenesis. Mediates inactivation of the TORC1 complex in response to amino acid starvation. Required for meiotic nuclear division.</text>
</comment>
<comment type="subunit">
    <text evidence="5">Component of the SEA complex composed of at least IML1/SEA1, RTC1/SEA2, MTC5/SEA3, NPR2, NPR3, SEA4, SEC13 and SEH1. Forms a heterodimer with NPR2.</text>
</comment>
<comment type="interaction">
    <interactant intactId="EBI-24336">
        <id>P38742</id>
    </interactant>
    <interactant intactId="EBI-12212">
        <id>P39923</id>
        <label>NPR2</label>
    </interactant>
    <organismsDiffer>false</organismsDiffer>
    <experiments>5</experiments>
</comment>
<comment type="subcellular location">
    <subcellularLocation>
        <location evidence="5">Vacuole membrane</location>
        <topology evidence="5">Peripheral membrane protein</topology>
    </subcellularLocation>
</comment>
<comment type="similarity">
    <text evidence="6">Belongs to the NPR3 family.</text>
</comment>
<protein>
    <recommendedName>
        <fullName>Nitrogen permease regulator 3</fullName>
    </recommendedName>
    <alternativeName>
        <fullName>Required for meiotic nuclear division protein 11</fullName>
    </alternativeName>
</protein>
<keyword id="KW-0002">3D-structure</keyword>
<keyword id="KW-0469">Meiosis</keyword>
<keyword id="KW-0472">Membrane</keyword>
<keyword id="KW-0597">Phosphoprotein</keyword>
<keyword id="KW-0653">Protein transport</keyword>
<keyword id="KW-1185">Reference proteome</keyword>
<keyword id="KW-0732">Signal</keyword>
<keyword id="KW-0813">Transport</keyword>
<keyword id="KW-0926">Vacuole</keyword>
<dbReference type="EMBL" id="U11582">
    <property type="protein sequence ID" value="AAB65076.1"/>
    <property type="molecule type" value="Genomic_DNA"/>
</dbReference>
<dbReference type="EMBL" id="BK006934">
    <property type="protein sequence ID" value="DAA06662.1"/>
    <property type="molecule type" value="Genomic_DNA"/>
</dbReference>
<dbReference type="PIR" id="S46837">
    <property type="entry name" value="S46837"/>
</dbReference>
<dbReference type="RefSeq" id="NP_011840.1">
    <property type="nucleotide sequence ID" value="NM_001179103.1"/>
</dbReference>
<dbReference type="PDB" id="8ADL">
    <property type="method" value="EM"/>
    <property type="resolution" value="2.95 A"/>
    <property type="chains" value="U/V=1-1146"/>
</dbReference>
<dbReference type="PDB" id="8AE6">
    <property type="method" value="EM"/>
    <property type="resolution" value="2.70 A"/>
    <property type="chains" value="U=1-1146"/>
</dbReference>
<dbReference type="PDBsum" id="8ADL"/>
<dbReference type="PDBsum" id="8AE6"/>
<dbReference type="EMDB" id="EMD-15364"/>
<dbReference type="EMDB" id="EMD-15381"/>
<dbReference type="SMR" id="P38742"/>
<dbReference type="BioGRID" id="36399">
    <property type="interactions" value="417"/>
</dbReference>
<dbReference type="ComplexPortal" id="CPX-3231">
    <property type="entry name" value="SEA complex"/>
</dbReference>
<dbReference type="DIP" id="DIP-2087N"/>
<dbReference type="FunCoup" id="P38742">
    <property type="interactions" value="165"/>
</dbReference>
<dbReference type="IntAct" id="P38742">
    <property type="interactions" value="22"/>
</dbReference>
<dbReference type="MINT" id="P38742"/>
<dbReference type="STRING" id="4932.YHL023C"/>
<dbReference type="GlyGen" id="P38742">
    <property type="glycosylation" value="1 site"/>
</dbReference>
<dbReference type="iPTMnet" id="P38742"/>
<dbReference type="PaxDb" id="4932-YHL023C"/>
<dbReference type="PeptideAtlas" id="P38742"/>
<dbReference type="EnsemblFungi" id="YHL023C_mRNA">
    <property type="protein sequence ID" value="YHL023C"/>
    <property type="gene ID" value="YHL023C"/>
</dbReference>
<dbReference type="GeneID" id="856362"/>
<dbReference type="KEGG" id="sce:YHL023C"/>
<dbReference type="AGR" id="SGD:S000001015"/>
<dbReference type="SGD" id="S000001015">
    <property type="gene designation" value="NPR3"/>
</dbReference>
<dbReference type="VEuPathDB" id="FungiDB:YHL023C"/>
<dbReference type="eggNOG" id="ENOG502QW35">
    <property type="taxonomic scope" value="Eukaryota"/>
</dbReference>
<dbReference type="GeneTree" id="ENSGT00390000015916"/>
<dbReference type="HOGENOM" id="CLU_014314_0_0_1"/>
<dbReference type="InParanoid" id="P38742"/>
<dbReference type="OMA" id="RTDYVWK"/>
<dbReference type="OrthoDB" id="18648at2759"/>
<dbReference type="BioCyc" id="YEAST:G3O-31043-MONOMER"/>
<dbReference type="BioGRID-ORCS" id="856362">
    <property type="hits" value="1 hit in 10 CRISPR screens"/>
</dbReference>
<dbReference type="PRO" id="PR:P38742"/>
<dbReference type="Proteomes" id="UP000002311">
    <property type="component" value="Chromosome VIII"/>
</dbReference>
<dbReference type="RNAct" id="P38742">
    <property type="molecule type" value="protein"/>
</dbReference>
<dbReference type="GO" id="GO:1990130">
    <property type="term" value="C:GATOR1 complex"/>
    <property type="evidence" value="ECO:0000314"/>
    <property type="project" value="SGD"/>
</dbReference>
<dbReference type="GO" id="GO:0035859">
    <property type="term" value="C:Seh1-associated complex"/>
    <property type="evidence" value="ECO:0000314"/>
    <property type="project" value="SGD"/>
</dbReference>
<dbReference type="GO" id="GO:0005774">
    <property type="term" value="C:vacuolar membrane"/>
    <property type="evidence" value="ECO:0000303"/>
    <property type="project" value="ComplexPortal"/>
</dbReference>
<dbReference type="GO" id="GO:0034198">
    <property type="term" value="P:cellular response to amino acid starvation"/>
    <property type="evidence" value="ECO:0000315"/>
    <property type="project" value="SGD"/>
</dbReference>
<dbReference type="GO" id="GO:0006995">
    <property type="term" value="P:cellular response to nitrogen starvation"/>
    <property type="evidence" value="ECO:0000315"/>
    <property type="project" value="SGD"/>
</dbReference>
<dbReference type="GO" id="GO:0051321">
    <property type="term" value="P:meiotic cell cycle"/>
    <property type="evidence" value="ECO:0000315"/>
    <property type="project" value="SGD"/>
</dbReference>
<dbReference type="GO" id="GO:0051058">
    <property type="term" value="P:negative regulation of small GTPase mediated signal transduction"/>
    <property type="evidence" value="ECO:0000316"/>
    <property type="project" value="SGD"/>
</dbReference>
<dbReference type="GO" id="GO:1904262">
    <property type="term" value="P:negative regulation of TORC1 signaling"/>
    <property type="evidence" value="ECO:0000315"/>
    <property type="project" value="SGD"/>
</dbReference>
<dbReference type="GO" id="GO:0010508">
    <property type="term" value="P:positive regulation of autophagy"/>
    <property type="evidence" value="ECO:0000315"/>
    <property type="project" value="SGD"/>
</dbReference>
<dbReference type="GO" id="GO:0015031">
    <property type="term" value="P:protein transport"/>
    <property type="evidence" value="ECO:0007669"/>
    <property type="project" value="UniProtKB-KW"/>
</dbReference>
<dbReference type="GO" id="GO:0007124">
    <property type="term" value="P:pseudohyphal growth"/>
    <property type="evidence" value="ECO:0000315"/>
    <property type="project" value="SGD"/>
</dbReference>
<dbReference type="GO" id="GO:2000785">
    <property type="term" value="P:regulation of autophagosome assembly"/>
    <property type="evidence" value="ECO:0000315"/>
    <property type="project" value="SGD"/>
</dbReference>
<dbReference type="GO" id="GO:1903432">
    <property type="term" value="P:regulation of TORC1 signaling"/>
    <property type="evidence" value="ECO:0000314"/>
    <property type="project" value="ComplexPortal"/>
</dbReference>
<dbReference type="InterPro" id="IPR056603">
    <property type="entry name" value="HTH_NPRL3"/>
</dbReference>
<dbReference type="InterPro" id="IPR005365">
    <property type="entry name" value="Npr3"/>
</dbReference>
<dbReference type="PANTHER" id="PTHR13153">
    <property type="entry name" value="CGTHBA PROTEIN -14 GENE PROTEIN"/>
    <property type="match status" value="1"/>
</dbReference>
<dbReference type="PANTHER" id="PTHR13153:SF5">
    <property type="entry name" value="GATOR COMPLEX PROTEIN NPRL3"/>
    <property type="match status" value="1"/>
</dbReference>
<dbReference type="Pfam" id="PF24064">
    <property type="entry name" value="HTH_NPRL3"/>
    <property type="match status" value="1"/>
</dbReference>
<dbReference type="Pfam" id="PF03666">
    <property type="entry name" value="NPR3"/>
    <property type="match status" value="1"/>
</dbReference>
<gene>
    <name type="primary">NPR3</name>
    <name type="synonym">RMD11</name>
    <name type="ordered locus">YHL023C</name>
</gene>
<accession>P38742</accession>
<accession>D3DKU5</accession>
<reference key="1">
    <citation type="journal article" date="1994" name="Science">
        <title>Complete nucleotide sequence of Saccharomyces cerevisiae chromosome VIII.</title>
        <authorList>
            <person name="Johnston M."/>
            <person name="Andrews S."/>
            <person name="Brinkman R."/>
            <person name="Cooper J."/>
            <person name="Ding H."/>
            <person name="Dover J."/>
            <person name="Du Z."/>
            <person name="Favello A."/>
            <person name="Fulton L."/>
            <person name="Gattung S."/>
            <person name="Geisel C."/>
            <person name="Kirsten J."/>
            <person name="Kucaba T."/>
            <person name="Hillier L.W."/>
            <person name="Jier M."/>
            <person name="Johnston L."/>
            <person name="Langston Y."/>
            <person name="Latreille P."/>
            <person name="Louis E.J."/>
            <person name="Macri C."/>
            <person name="Mardis E."/>
            <person name="Menezes S."/>
            <person name="Mouser L."/>
            <person name="Nhan M."/>
            <person name="Rifkin L."/>
            <person name="Riles L."/>
            <person name="St Peter H."/>
            <person name="Trevaskis E."/>
            <person name="Vaughan K."/>
            <person name="Vignati D."/>
            <person name="Wilcox L."/>
            <person name="Wohldman P."/>
            <person name="Waterston R."/>
            <person name="Wilson R."/>
            <person name="Vaudin M."/>
        </authorList>
    </citation>
    <scope>NUCLEOTIDE SEQUENCE [LARGE SCALE GENOMIC DNA]</scope>
    <source>
        <strain>ATCC 204508 / S288c</strain>
    </source>
</reference>
<reference key="2">
    <citation type="journal article" date="2014" name="G3 (Bethesda)">
        <title>The reference genome sequence of Saccharomyces cerevisiae: Then and now.</title>
        <authorList>
            <person name="Engel S.R."/>
            <person name="Dietrich F.S."/>
            <person name="Fisk D.G."/>
            <person name="Binkley G."/>
            <person name="Balakrishnan R."/>
            <person name="Costanzo M.C."/>
            <person name="Dwight S.S."/>
            <person name="Hitz B.C."/>
            <person name="Karra K."/>
            <person name="Nash R.S."/>
            <person name="Weng S."/>
            <person name="Wong E.D."/>
            <person name="Lloyd P."/>
            <person name="Skrzypek M.S."/>
            <person name="Miyasato S.R."/>
            <person name="Simison M."/>
            <person name="Cherry J.M."/>
        </authorList>
    </citation>
    <scope>GENOME REANNOTATION</scope>
    <source>
        <strain>ATCC 204508 / S288c</strain>
    </source>
</reference>
<reference key="3">
    <citation type="journal article" date="2003" name="Genetics">
        <title>Large-scale functional genomic analysis of sporulation and meiosis in Saccharomyces cerevisiae.</title>
        <authorList>
            <person name="Enyenihi A.H."/>
            <person name="Saunders W.S."/>
        </authorList>
    </citation>
    <scope>FUNCTION</scope>
</reference>
<reference key="4">
    <citation type="journal article" date="2005" name="Mol. Cell. Proteomics">
        <title>Quantitative phosphoproteomics applied to the yeast pheromone signaling pathway.</title>
        <authorList>
            <person name="Gruhler A."/>
            <person name="Olsen J.V."/>
            <person name="Mohammed S."/>
            <person name="Mortensen P."/>
            <person name="Faergeman N.J."/>
            <person name="Mann M."/>
            <person name="Jensen O.N."/>
        </authorList>
    </citation>
    <scope>PHOSPHORYLATION [LARGE SCALE ANALYSIS] AT SER-76</scope>
    <scope>IDENTIFICATION BY MASS SPECTROMETRY [LARGE SCALE ANALYSIS]</scope>
    <source>
        <strain>YAL6B</strain>
    </source>
</reference>
<reference key="5">
    <citation type="journal article" date="2007" name="J. Proteome Res.">
        <title>Large-scale phosphorylation analysis of alpha-factor-arrested Saccharomyces cerevisiae.</title>
        <authorList>
            <person name="Li X."/>
            <person name="Gerber S.A."/>
            <person name="Rudner A.D."/>
            <person name="Beausoleil S.A."/>
            <person name="Haas W."/>
            <person name="Villen J."/>
            <person name="Elias J.E."/>
            <person name="Gygi S.P."/>
        </authorList>
    </citation>
    <scope>PHOSPHORYLATION [LARGE SCALE ANALYSIS] AT SER-486</scope>
    <scope>IDENTIFICATION BY MASS SPECTROMETRY [LARGE SCALE ANALYSIS]</scope>
    <source>
        <strain>ADR376</strain>
    </source>
</reference>
<reference key="6">
    <citation type="journal article" date="2007" name="Proc. Natl. Acad. Sci. U.S.A.">
        <title>Analysis of phosphorylation sites on proteins from Saccharomyces cerevisiae by electron transfer dissociation (ETD) mass spectrometry.</title>
        <authorList>
            <person name="Chi A."/>
            <person name="Huttenhower C."/>
            <person name="Geer L.Y."/>
            <person name="Coon J.J."/>
            <person name="Syka J.E.P."/>
            <person name="Bai D.L."/>
            <person name="Shabanowitz J."/>
            <person name="Burke D.J."/>
            <person name="Troyanskaya O.G."/>
            <person name="Hunt D.F."/>
        </authorList>
    </citation>
    <scope>PHOSPHORYLATION [LARGE SCALE ANALYSIS] AT SER-987</scope>
    <scope>IDENTIFICATION BY MASS SPECTROMETRY [LARGE SCALE ANALYSIS]</scope>
</reference>
<reference key="7">
    <citation type="journal article" date="2008" name="Mol. Cell. Proteomics">
        <title>A multidimensional chromatography technology for in-depth phosphoproteome analysis.</title>
        <authorList>
            <person name="Albuquerque C.P."/>
            <person name="Smolka M.B."/>
            <person name="Payne S.H."/>
            <person name="Bafna V."/>
            <person name="Eng J."/>
            <person name="Zhou H."/>
        </authorList>
    </citation>
    <scope>PHOSPHORYLATION [LARGE SCALE ANALYSIS] AT SER-486</scope>
    <scope>IDENTIFICATION BY MASS SPECTROMETRY [LARGE SCALE ANALYSIS]</scope>
</reference>
<reference key="8">
    <citation type="journal article" date="2009" name="PLoS Genet.">
        <title>A genome-wide screen for regulators of TORC1 in response to amino acid starvation reveals a conserved Npr2/3 complex.</title>
        <authorList>
            <person name="Neklesa T.K."/>
            <person name="Davis R.W."/>
        </authorList>
    </citation>
    <scope>FUNCTION</scope>
    <scope>INTERACTION WITH NPR2</scope>
</reference>
<reference key="9">
    <citation type="journal article" date="2009" name="Science">
        <title>Global analysis of Cdk1 substrate phosphorylation sites provides insights into evolution.</title>
        <authorList>
            <person name="Holt L.J."/>
            <person name="Tuch B.B."/>
            <person name="Villen J."/>
            <person name="Johnson A.D."/>
            <person name="Gygi S.P."/>
            <person name="Morgan D.O."/>
        </authorList>
    </citation>
    <scope>PHOSPHORYLATION [LARGE SCALE ANALYSIS] AT SER-486</scope>
    <scope>IDENTIFICATION BY MASS SPECTROMETRY [LARGE SCALE ANALYSIS]</scope>
</reference>
<reference key="10">
    <citation type="journal article" date="2011" name="Mol. Cell. Proteomics">
        <title>A conserved coatomer-related complex containing Sec13 and Seh1 dynamically associates with the vacuole in Saccharomyces cerevisiae.</title>
        <authorList>
            <person name="Dokudovskaya S."/>
            <person name="Waharte F."/>
            <person name="Schlessinger A."/>
            <person name="Pieper U."/>
            <person name="Devos D.P."/>
            <person name="Cristea I.M."/>
            <person name="Williams R."/>
            <person name="Salamero J."/>
            <person name="Chait B.T."/>
            <person name="Sali A."/>
            <person name="Field M.C."/>
            <person name="Rout M.P."/>
            <person name="Dargemont C."/>
        </authorList>
    </citation>
    <scope>SUBCELLULAR LOCATION</scope>
    <scope>IDENTIFICATION IN THE SEA COMPLEX</scope>
    <scope>FUNCTION</scope>
</reference>
<name>NPR3_YEAST</name>
<sequence>MDECLPNSCLLGVHLVISTHSGPQIVYHYPPSNTAFLTNNPTKHQHLYGNHANLNKNTSTNKEEKLFNSGSTKTASQIALNESAKSYNTAITPSMTNTNTNNVTLPPTRSHANTVGSQSSIPAATNGVGYRKTDIEDTSRTFQYQETESETSSSGLSDSELSTDYLDISSDSFSISSSLSSSSLSSSPSSSSSSSPPQDGLSRTNSSFQSTDSMSPTSPQMIMENDSISVAESYLDSGTNNKSRAASKRSQNFFHKLSTKKSTDSKTHSPVRKLKSKPSQSTKKGNKLLKNTSNETDGNAFTGSCSISSKKSLSSTGEHNQELRNSSLNDTPGQSPHHYHHRYHHYHKNAATSQRNSHTQYDVEEEDMEVSAMLQDGKISMNEIFFEEENFQDINKILEFDNDFVAEFCSPEREMCNTRFEFTVDNFCFLGLPIHVDSQGRWRKSKHKNKTRSKRSSSTTTNISRKKSIASKISSLSENTLKKVNSGEADTVYDSNIGHEASTDTPNLRINTDVSGNEFEREKEDLGKNMNMFHVCFVMNPHLIEYNKRIDDMYQFVVTRLSLLLRYVQSKTSYISSECHIILKEKERVLKHSKTYQSIRGAGNKGKYLYQRILAKSSLARALTECVDKIQRNEIACLEINDDKVISLQIPIQNEFEKMPNFKLQPVLRGSYLTSILNMKFLEKSSLRIESQNRQNDQAQFSDTNNNIYRFGNNINSTGHCGAANVDDGDDNESNYYCDDNDDLLNYALLLLDEPNNIISSLETFSYQDDIGTIILKHLVRNIQPNIPLRSYRYLITDLLDNPSSLDDLTTETNSLESSILRSCALHLMYWRHARIVIPLSSKYTYIVSPLAPIQGYTIDDYKSTSQNDGNVKKMDDRENNKSGSDRVPLIYQNSMLFRSKFPSLPSLPIFLSLLSTDKPQAYSNIIPSREHKPVYLNALAWLIQYGYVTQLLTFINIRVDKHIKMAVDEDLEKEGFRKTNTARRPSMDYKKTDKKLDDEDGQSRDANASEACSGKNEGMQSNDNNKDVDEKDNENDSRVDDRDDNEIAIADEEEILHFEYDDPEMQHDYTIILEPERATAIEKRWLYRCIYGQPSDIQILFNKLLKYFNGKVPMELVIIKEEISRHDLKKLLNALDKYLIEIHHW</sequence>
<evidence type="ECO:0000255" key="1"/>
<evidence type="ECO:0000256" key="2">
    <source>
        <dbReference type="SAM" id="MobiDB-lite"/>
    </source>
</evidence>
<evidence type="ECO:0000269" key="3">
    <source>
    </source>
</evidence>
<evidence type="ECO:0000269" key="4">
    <source>
    </source>
</evidence>
<evidence type="ECO:0000269" key="5">
    <source>
    </source>
</evidence>
<evidence type="ECO:0000305" key="6"/>
<evidence type="ECO:0007744" key="7">
    <source>
    </source>
</evidence>
<evidence type="ECO:0007744" key="8">
    <source>
    </source>
</evidence>
<evidence type="ECO:0007744" key="9">
    <source>
    </source>
</evidence>
<evidence type="ECO:0007744" key="10">
    <source>
    </source>
</evidence>
<evidence type="ECO:0007744" key="11">
    <source>
    </source>
</evidence>
<evidence type="ECO:0007829" key="12">
    <source>
        <dbReference type="PDB" id="8ADL"/>
    </source>
</evidence>
<evidence type="ECO:0007829" key="13">
    <source>
        <dbReference type="PDB" id="8AE6"/>
    </source>
</evidence>
<feature type="signal peptide" evidence="1">
    <location>
        <begin position="1"/>
        <end position="25"/>
    </location>
</feature>
<feature type="chain" id="PRO_0000202882" description="Nitrogen permease regulator 3">
    <location>
        <begin position="26"/>
        <end position="1146"/>
    </location>
</feature>
<feature type="region of interest" description="Disordered" evidence="2">
    <location>
        <begin position="90"/>
        <end position="159"/>
    </location>
</feature>
<feature type="region of interest" description="Disordered" evidence="2">
    <location>
        <begin position="177"/>
        <end position="221"/>
    </location>
</feature>
<feature type="region of interest" description="Disordered" evidence="2">
    <location>
        <begin position="237"/>
        <end position="340"/>
    </location>
</feature>
<feature type="region of interest" description="Disordered" evidence="2">
    <location>
        <begin position="440"/>
        <end position="466"/>
    </location>
</feature>
<feature type="region of interest" description="Disordered" evidence="2">
    <location>
        <begin position="979"/>
        <end position="1047"/>
    </location>
</feature>
<feature type="compositionally biased region" description="Polar residues" evidence="2">
    <location>
        <begin position="105"/>
        <end position="123"/>
    </location>
</feature>
<feature type="compositionally biased region" description="Low complexity" evidence="2">
    <location>
        <begin position="150"/>
        <end position="159"/>
    </location>
</feature>
<feature type="compositionally biased region" description="Low complexity" evidence="2">
    <location>
        <begin position="177"/>
        <end position="196"/>
    </location>
</feature>
<feature type="compositionally biased region" description="Polar residues" evidence="2">
    <location>
        <begin position="201"/>
        <end position="221"/>
    </location>
</feature>
<feature type="compositionally biased region" description="Polar residues" evidence="2">
    <location>
        <begin position="237"/>
        <end position="253"/>
    </location>
</feature>
<feature type="compositionally biased region" description="Polar residues" evidence="2">
    <location>
        <begin position="277"/>
        <end position="303"/>
    </location>
</feature>
<feature type="compositionally biased region" description="Low complexity" evidence="2">
    <location>
        <begin position="304"/>
        <end position="315"/>
    </location>
</feature>
<feature type="compositionally biased region" description="Polar residues" evidence="2">
    <location>
        <begin position="323"/>
        <end position="334"/>
    </location>
</feature>
<feature type="compositionally biased region" description="Basic residues" evidence="2">
    <location>
        <begin position="441"/>
        <end position="455"/>
    </location>
</feature>
<feature type="compositionally biased region" description="Basic and acidic residues" evidence="2">
    <location>
        <begin position="986"/>
        <end position="1004"/>
    </location>
</feature>
<feature type="compositionally biased region" description="Basic and acidic residues" evidence="2">
    <location>
        <begin position="1025"/>
        <end position="1042"/>
    </location>
</feature>
<feature type="modified residue" description="Phosphoserine" evidence="7">
    <location>
        <position position="76"/>
    </location>
</feature>
<feature type="modified residue" description="Phosphoserine" evidence="9 10 11">
    <location>
        <position position="486"/>
    </location>
</feature>
<feature type="modified residue" description="Phosphoserine" evidence="8">
    <location>
        <position position="987"/>
    </location>
</feature>
<feature type="strand" evidence="13">
    <location>
        <begin position="10"/>
        <end position="13"/>
    </location>
</feature>
<feature type="strand" evidence="13">
    <location>
        <begin position="16"/>
        <end position="18"/>
    </location>
</feature>
<feature type="strand" evidence="13">
    <location>
        <begin position="23"/>
        <end position="25"/>
    </location>
</feature>
<feature type="helix" evidence="13">
    <location>
        <begin position="34"/>
        <end position="38"/>
    </location>
</feature>
<feature type="helix" evidence="13">
    <location>
        <begin position="365"/>
        <end position="375"/>
    </location>
</feature>
<feature type="helix" evidence="13">
    <location>
        <begin position="383"/>
        <end position="386"/>
    </location>
</feature>
<feature type="strand" evidence="12">
    <location>
        <begin position="387"/>
        <end position="390"/>
    </location>
</feature>
<feature type="strand" evidence="13">
    <location>
        <begin position="396"/>
        <end position="401"/>
    </location>
</feature>
<feature type="helix" evidence="13">
    <location>
        <begin position="402"/>
        <end position="408"/>
    </location>
</feature>
<feature type="strand" evidence="13">
    <location>
        <begin position="415"/>
        <end position="418"/>
    </location>
</feature>
<feature type="strand" evidence="13">
    <location>
        <begin position="422"/>
        <end position="424"/>
    </location>
</feature>
<feature type="strand" evidence="13">
    <location>
        <begin position="427"/>
        <end position="431"/>
    </location>
</feature>
<feature type="strand" evidence="13">
    <location>
        <begin position="438"/>
        <end position="440"/>
    </location>
</feature>
<feature type="helix" evidence="13">
    <location>
        <begin position="526"/>
        <end position="529"/>
    </location>
</feature>
<feature type="strand" evidence="13">
    <location>
        <begin position="532"/>
        <end position="534"/>
    </location>
</feature>
<feature type="strand" evidence="13">
    <location>
        <begin position="537"/>
        <end position="539"/>
    </location>
</feature>
<feature type="helix" evidence="13">
    <location>
        <begin position="546"/>
        <end position="556"/>
    </location>
</feature>
<feature type="helix" evidence="13">
    <location>
        <begin position="558"/>
        <end position="572"/>
    </location>
</feature>
<feature type="helix" evidence="13">
    <location>
        <begin position="574"/>
        <end position="590"/>
    </location>
</feature>
<feature type="helix" evidence="13">
    <location>
        <begin position="594"/>
        <end position="597"/>
    </location>
</feature>
<feature type="helix" evidence="13">
    <location>
        <begin position="602"/>
        <end position="616"/>
    </location>
</feature>
<feature type="helix" evidence="13">
    <location>
        <begin position="619"/>
        <end position="631"/>
    </location>
</feature>
<feature type="strand" evidence="13">
    <location>
        <begin position="636"/>
        <end position="640"/>
    </location>
</feature>
<feature type="turn" evidence="13">
    <location>
        <begin position="641"/>
        <end position="643"/>
    </location>
</feature>
<feature type="strand" evidence="13">
    <location>
        <begin position="644"/>
        <end position="648"/>
    </location>
</feature>
<feature type="strand" evidence="13">
    <location>
        <begin position="655"/>
        <end position="658"/>
    </location>
</feature>
<feature type="turn" evidence="13">
    <location>
        <begin position="662"/>
        <end position="664"/>
    </location>
</feature>
<feature type="helix" evidence="13">
    <location>
        <begin position="679"/>
        <end position="682"/>
    </location>
</feature>
<feature type="helix" evidence="13">
    <location>
        <begin position="744"/>
        <end position="746"/>
    </location>
</feature>
<feature type="strand" evidence="13">
    <location>
        <begin position="747"/>
        <end position="753"/>
    </location>
</feature>
<feature type="helix" evidence="13">
    <location>
        <begin position="755"/>
        <end position="762"/>
    </location>
</feature>
<feature type="helix" evidence="13">
    <location>
        <begin position="763"/>
        <end position="765"/>
    </location>
</feature>
<feature type="helix" evidence="13">
    <location>
        <begin position="771"/>
        <end position="781"/>
    </location>
</feature>
<feature type="helix" evidence="13">
    <location>
        <begin position="789"/>
        <end position="793"/>
    </location>
</feature>
<feature type="helix" evidence="13">
    <location>
        <begin position="794"/>
        <end position="797"/>
    </location>
</feature>
<feature type="helix" evidence="13">
    <location>
        <begin position="816"/>
        <end position="830"/>
    </location>
</feature>
<feature type="strand" evidence="13">
    <location>
        <begin position="833"/>
        <end position="837"/>
    </location>
</feature>
<feature type="strand" evidence="13">
    <location>
        <begin position="844"/>
        <end position="848"/>
    </location>
</feature>
<feature type="strand" evidence="13">
    <location>
        <begin position="855"/>
        <end position="858"/>
    </location>
</feature>
<feature type="helix" evidence="13">
    <location>
        <begin position="890"/>
        <end position="901"/>
    </location>
</feature>
<feature type="helix" evidence="13">
    <location>
        <begin position="908"/>
        <end position="914"/>
    </location>
</feature>
<feature type="strand" evidence="13">
    <location>
        <begin position="916"/>
        <end position="918"/>
    </location>
</feature>
<feature type="helix" evidence="13">
    <location>
        <begin position="923"/>
        <end position="925"/>
    </location>
</feature>
<feature type="helix" evidence="12">
    <location>
        <begin position="930"/>
        <end position="932"/>
    </location>
</feature>
<feature type="helix" evidence="13">
    <location>
        <begin position="933"/>
        <end position="945"/>
    </location>
</feature>
<feature type="strand" evidence="13">
    <location>
        <begin position="948"/>
        <end position="951"/>
    </location>
</feature>
<feature type="strand" evidence="13">
    <location>
        <begin position="953"/>
        <end position="960"/>
    </location>
</feature>
<feature type="helix" evidence="13">
    <location>
        <begin position="962"/>
        <end position="974"/>
    </location>
</feature>
<feature type="strand" evidence="13">
    <location>
        <begin position="1071"/>
        <end position="1074"/>
    </location>
</feature>
<feature type="helix" evidence="13">
    <location>
        <begin position="1081"/>
        <end position="1090"/>
    </location>
</feature>
<feature type="strand" evidence="13">
    <location>
        <begin position="1091"/>
        <end position="1093"/>
    </location>
</feature>
<feature type="helix" evidence="13">
    <location>
        <begin position="1096"/>
        <end position="1104"/>
    </location>
</feature>
<feature type="turn" evidence="13">
    <location>
        <begin position="1107"/>
        <end position="1109"/>
    </location>
</feature>
<feature type="strand" evidence="12">
    <location>
        <begin position="1110"/>
        <end position="1114"/>
    </location>
</feature>
<feature type="helix" evidence="13">
    <location>
        <begin position="1115"/>
        <end position="1122"/>
    </location>
</feature>
<feature type="helix" evidence="13">
    <location>
        <begin position="1126"/>
        <end position="1135"/>
    </location>
</feature>
<feature type="strand" evidence="13">
    <location>
        <begin position="1136"/>
        <end position="1145"/>
    </location>
</feature>